<protein>
    <recommendedName>
        <fullName>Tubulin alpha chain</fullName>
        <ecNumber evidence="2">3.6.5.-</ecNumber>
    </recommendedName>
</protein>
<keyword id="KW-0963">Cytoplasm</keyword>
<keyword id="KW-0206">Cytoskeleton</keyword>
<keyword id="KW-0342">GTP-binding</keyword>
<keyword id="KW-0378">Hydrolase</keyword>
<keyword id="KW-0460">Magnesium</keyword>
<keyword id="KW-0479">Metal-binding</keyword>
<keyword id="KW-0493">Microtubule</keyword>
<keyword id="KW-0547">Nucleotide-binding</keyword>
<keyword id="KW-1185">Reference proteome</keyword>
<evidence type="ECO:0000250" key="1"/>
<evidence type="ECO:0000250" key="2">
    <source>
        <dbReference type="UniProtKB" id="P68363"/>
    </source>
</evidence>
<evidence type="ECO:0000305" key="3"/>
<dbReference type="EC" id="3.6.5.-" evidence="2"/>
<dbReference type="EMBL" id="Z70290">
    <property type="protein sequence ID" value="CAA94304.1"/>
    <property type="molecule type" value="Genomic_DNA"/>
</dbReference>
<dbReference type="EMBL" id="CABT02000053">
    <property type="protein sequence ID" value="CCC13995.1"/>
    <property type="molecule type" value="Genomic_DNA"/>
</dbReference>
<dbReference type="RefSeq" id="XP_003351146.1">
    <property type="nucleotide sequence ID" value="XM_003351098.1"/>
</dbReference>
<dbReference type="SMR" id="Q92335"/>
<dbReference type="FunCoup" id="Q92335">
    <property type="interactions" value="1105"/>
</dbReference>
<dbReference type="STRING" id="771870.Q92335"/>
<dbReference type="GeneID" id="10808725"/>
<dbReference type="KEGG" id="smp:10808725"/>
<dbReference type="VEuPathDB" id="FungiDB:SMAC_08161"/>
<dbReference type="eggNOG" id="KOG1376">
    <property type="taxonomic scope" value="Eukaryota"/>
</dbReference>
<dbReference type="HOGENOM" id="CLU_015718_1_0_1"/>
<dbReference type="InParanoid" id="Q92335"/>
<dbReference type="OMA" id="YMASCIL"/>
<dbReference type="OrthoDB" id="1662883at2759"/>
<dbReference type="Proteomes" id="UP000001881">
    <property type="component" value="Unassembled WGS sequence"/>
</dbReference>
<dbReference type="GO" id="GO:0005737">
    <property type="term" value="C:cytoplasm"/>
    <property type="evidence" value="ECO:0007669"/>
    <property type="project" value="UniProtKB-KW"/>
</dbReference>
<dbReference type="GO" id="GO:0005874">
    <property type="term" value="C:microtubule"/>
    <property type="evidence" value="ECO:0007669"/>
    <property type="project" value="UniProtKB-KW"/>
</dbReference>
<dbReference type="GO" id="GO:0005525">
    <property type="term" value="F:GTP binding"/>
    <property type="evidence" value="ECO:0007669"/>
    <property type="project" value="UniProtKB-KW"/>
</dbReference>
<dbReference type="GO" id="GO:0016787">
    <property type="term" value="F:hydrolase activity"/>
    <property type="evidence" value="ECO:0007669"/>
    <property type="project" value="UniProtKB-KW"/>
</dbReference>
<dbReference type="GO" id="GO:0046872">
    <property type="term" value="F:metal ion binding"/>
    <property type="evidence" value="ECO:0007669"/>
    <property type="project" value="UniProtKB-KW"/>
</dbReference>
<dbReference type="GO" id="GO:0005200">
    <property type="term" value="F:structural constituent of cytoskeleton"/>
    <property type="evidence" value="ECO:0007669"/>
    <property type="project" value="InterPro"/>
</dbReference>
<dbReference type="GO" id="GO:0007017">
    <property type="term" value="P:microtubule-based process"/>
    <property type="evidence" value="ECO:0007669"/>
    <property type="project" value="InterPro"/>
</dbReference>
<dbReference type="CDD" id="cd02186">
    <property type="entry name" value="alpha_tubulin"/>
    <property type="match status" value="1"/>
</dbReference>
<dbReference type="FunFam" id="1.10.287.600:FF:000005">
    <property type="entry name" value="Tubulin alpha chain"/>
    <property type="match status" value="1"/>
</dbReference>
<dbReference type="FunFam" id="3.30.1330.20:FF:000001">
    <property type="entry name" value="Tubulin alpha chain"/>
    <property type="match status" value="1"/>
</dbReference>
<dbReference type="FunFam" id="3.40.50.1440:FF:000008">
    <property type="entry name" value="Tubulin alpha chain"/>
    <property type="match status" value="1"/>
</dbReference>
<dbReference type="Gene3D" id="1.10.287.600">
    <property type="entry name" value="Helix hairpin bin"/>
    <property type="match status" value="1"/>
</dbReference>
<dbReference type="Gene3D" id="3.30.1330.20">
    <property type="entry name" value="Tubulin/FtsZ, C-terminal domain"/>
    <property type="match status" value="1"/>
</dbReference>
<dbReference type="Gene3D" id="3.40.50.1440">
    <property type="entry name" value="Tubulin/FtsZ, GTPase domain"/>
    <property type="match status" value="1"/>
</dbReference>
<dbReference type="InterPro" id="IPR002452">
    <property type="entry name" value="Alpha_tubulin"/>
</dbReference>
<dbReference type="InterPro" id="IPR013838">
    <property type="entry name" value="Beta-tubulin_BS"/>
</dbReference>
<dbReference type="InterPro" id="IPR008280">
    <property type="entry name" value="Tub_FtsZ_C"/>
</dbReference>
<dbReference type="InterPro" id="IPR000217">
    <property type="entry name" value="Tubulin"/>
</dbReference>
<dbReference type="InterPro" id="IPR037103">
    <property type="entry name" value="Tubulin/FtsZ-like_C"/>
</dbReference>
<dbReference type="InterPro" id="IPR018316">
    <property type="entry name" value="Tubulin/FtsZ_2-layer-sand-dom"/>
</dbReference>
<dbReference type="InterPro" id="IPR036525">
    <property type="entry name" value="Tubulin/FtsZ_GTPase_sf"/>
</dbReference>
<dbReference type="InterPro" id="IPR023123">
    <property type="entry name" value="Tubulin_C"/>
</dbReference>
<dbReference type="InterPro" id="IPR017975">
    <property type="entry name" value="Tubulin_CS"/>
</dbReference>
<dbReference type="InterPro" id="IPR003008">
    <property type="entry name" value="Tubulin_FtsZ_GTPase"/>
</dbReference>
<dbReference type="PANTHER" id="PTHR11588">
    <property type="entry name" value="TUBULIN"/>
    <property type="match status" value="1"/>
</dbReference>
<dbReference type="Pfam" id="PF00091">
    <property type="entry name" value="Tubulin"/>
    <property type="match status" value="1"/>
</dbReference>
<dbReference type="Pfam" id="PF03953">
    <property type="entry name" value="Tubulin_C"/>
    <property type="match status" value="1"/>
</dbReference>
<dbReference type="PRINTS" id="PR01162">
    <property type="entry name" value="ALPHATUBULIN"/>
</dbReference>
<dbReference type="PRINTS" id="PR01161">
    <property type="entry name" value="TUBULIN"/>
</dbReference>
<dbReference type="SMART" id="SM00864">
    <property type="entry name" value="Tubulin"/>
    <property type="match status" value="1"/>
</dbReference>
<dbReference type="SMART" id="SM00865">
    <property type="entry name" value="Tubulin_C"/>
    <property type="match status" value="1"/>
</dbReference>
<dbReference type="SUPFAM" id="SSF55307">
    <property type="entry name" value="Tubulin C-terminal domain-like"/>
    <property type="match status" value="1"/>
</dbReference>
<dbReference type="SUPFAM" id="SSF52490">
    <property type="entry name" value="Tubulin nucleotide-binding domain-like"/>
    <property type="match status" value="1"/>
</dbReference>
<dbReference type="PROSITE" id="PS00227">
    <property type="entry name" value="TUBULIN"/>
    <property type="match status" value="1"/>
</dbReference>
<proteinExistence type="inferred from homology"/>
<sequence>MREIISLNVGQAGCQIANSCWELYCLEHGIQPDGYLTEERKAADPDHGFSTFFSETGNGKYVPRTIYADLEPNVIDEVRTGAYRGLFHPEHMISGKEDASNNYARGHYTVGKELIDQVLDKVRRVADNCSGLQGFLVFHSFGGGTGSGFGALLMERLSVDYGKKSKLEFCVYPAPQTATSVVEPYNSILTTHTTLEHADCSFMVDNEAIYDICRRNLGLERPNYENLNRLIAQVVSSITASLRFDGSLNVDLNEFQTNLVPYPRIHFPLVAYAPVISAAKAAHEANSVQEMTMSCFEPNNQMVKCDPRHGKYMATCLLYRGDVVPNDAHAAVATLKTKRTIQFVDWCPTGFKLGICYQPPHQVPNGDLAKVNRAVCMLSNTTAIAEAWSALSSKFDLMYSKRAFVHWYVGEGMEEGEFSEAREDLAALERDYEEVAADSMEGEEVEAEY</sequence>
<name>TBA_SORMK</name>
<accession>Q92335</accession>
<accession>D1Z927</accession>
<accession>F7W9K4</accession>
<feature type="chain" id="PRO_0000048227" description="Tubulin alpha chain">
    <location>
        <begin position="1"/>
        <end position="449"/>
    </location>
</feature>
<feature type="active site" evidence="2">
    <location>
        <position position="254"/>
    </location>
</feature>
<feature type="binding site" evidence="2">
    <location>
        <position position="11"/>
    </location>
    <ligand>
        <name>GTP</name>
        <dbReference type="ChEBI" id="CHEBI:37565"/>
    </ligand>
</feature>
<feature type="binding site" evidence="2">
    <location>
        <position position="71"/>
    </location>
    <ligand>
        <name>GTP</name>
        <dbReference type="ChEBI" id="CHEBI:37565"/>
    </ligand>
</feature>
<feature type="binding site" evidence="2">
    <location>
        <position position="71"/>
    </location>
    <ligand>
        <name>Mg(2+)</name>
        <dbReference type="ChEBI" id="CHEBI:18420"/>
    </ligand>
</feature>
<feature type="binding site" evidence="2">
    <location>
        <position position="140"/>
    </location>
    <ligand>
        <name>GTP</name>
        <dbReference type="ChEBI" id="CHEBI:37565"/>
    </ligand>
</feature>
<feature type="binding site" evidence="2">
    <location>
        <position position="144"/>
    </location>
    <ligand>
        <name>GTP</name>
        <dbReference type="ChEBI" id="CHEBI:37565"/>
    </ligand>
</feature>
<feature type="binding site" evidence="2">
    <location>
        <position position="145"/>
    </location>
    <ligand>
        <name>GTP</name>
        <dbReference type="ChEBI" id="CHEBI:37565"/>
    </ligand>
</feature>
<feature type="binding site" evidence="2">
    <location>
        <position position="179"/>
    </location>
    <ligand>
        <name>GTP</name>
        <dbReference type="ChEBI" id="CHEBI:37565"/>
    </ligand>
</feature>
<feature type="binding site" evidence="2">
    <location>
        <position position="206"/>
    </location>
    <ligand>
        <name>GTP</name>
        <dbReference type="ChEBI" id="CHEBI:37565"/>
    </ligand>
</feature>
<feature type="binding site" evidence="2">
    <location>
        <position position="228"/>
    </location>
    <ligand>
        <name>GTP</name>
        <dbReference type="ChEBI" id="CHEBI:37565"/>
    </ligand>
</feature>
<feature type="site" description="Involved in polymerization" evidence="1">
    <location>
        <position position="449"/>
    </location>
</feature>
<feature type="sequence conflict" description="In Ref. 1; CAA94304." evidence="3" ref="1">
    <original>NSI</original>
    <variation>HNF</variation>
    <location>
        <begin position="186"/>
        <end position="188"/>
    </location>
</feature>
<feature type="sequence conflict" description="In Ref. 1; CAA94304." evidence="3" ref="1">
    <original>H</original>
    <variation>N</variation>
    <location>
        <position position="192"/>
    </location>
</feature>
<feature type="sequence conflict" description="In Ref. 1; CAA94304." evidence="3" ref="1">
    <original>H</original>
    <variation>Q</variation>
    <location>
        <position position="197"/>
    </location>
</feature>
<feature type="sequence conflict" description="In Ref. 1; CAA94304." evidence="3" ref="1">
    <original>R</original>
    <variation>G</variation>
    <location>
        <position position="320"/>
    </location>
</feature>
<feature type="sequence conflict" description="In Ref. 1; CAA94304." evidence="3" ref="1">
    <original>T</original>
    <variation>S</variation>
    <location>
        <position position="334"/>
    </location>
</feature>
<feature type="sequence conflict" description="In Ref. 1; CAA94304." evidence="3" ref="1">
    <original>D</original>
    <variation>V</variation>
    <location>
        <position position="424"/>
    </location>
</feature>
<feature type="sequence conflict" description="In Ref. 1; CAA94304." evidence="3" ref="1">
    <original>R</original>
    <variation>A</variation>
    <location>
        <position position="430"/>
    </location>
</feature>
<comment type="function">
    <text>Tubulin is the major constituent of microtubules, a cylinder consisting of laterally associated linear protofilaments composed of alpha- and beta-tubulin heterodimers. Microtubules grow by the addition of GTP-tubulin dimers to the microtubule end, where a stabilizing cap forms. Below the cap, tubulin dimers are in GDP-bound state, owing to GTPase activity of alpha-tubulin.</text>
</comment>
<comment type="catalytic activity">
    <reaction evidence="2">
        <text>GTP + H2O = GDP + phosphate + H(+)</text>
        <dbReference type="Rhea" id="RHEA:19669"/>
        <dbReference type="ChEBI" id="CHEBI:15377"/>
        <dbReference type="ChEBI" id="CHEBI:15378"/>
        <dbReference type="ChEBI" id="CHEBI:37565"/>
        <dbReference type="ChEBI" id="CHEBI:43474"/>
        <dbReference type="ChEBI" id="CHEBI:58189"/>
    </reaction>
    <physiologicalReaction direction="left-to-right" evidence="2">
        <dbReference type="Rhea" id="RHEA:19670"/>
    </physiologicalReaction>
</comment>
<comment type="cofactor">
    <cofactor evidence="2">
        <name>Mg(2+)</name>
        <dbReference type="ChEBI" id="CHEBI:18420"/>
    </cofactor>
</comment>
<comment type="subunit">
    <text>Dimer of alpha and beta chains. A typical microtubule is a hollow water-filled tube with an outer diameter of 25 nm and an inner diameter of 15 nM. Alpha-beta heterodimers associate head-to-tail to form protofilaments running lengthwise along the microtubule wall with the beta-tubulin subunit facing the microtubule plus end conferring a structural polarity. Microtubules usually have 13 protofilaments but different protofilament numbers can be found in some organisms and specialized cells.</text>
</comment>
<comment type="subcellular location">
    <subcellularLocation>
        <location>Cytoplasm</location>
        <location>Cytoskeleton</location>
    </subcellularLocation>
</comment>
<comment type="similarity">
    <text evidence="3">Belongs to the tubulin family.</text>
</comment>
<gene>
    <name type="primary">TUBA</name>
    <name type="ORF">SMAC_08161</name>
</gene>
<organism>
    <name type="scientific">Sordaria macrospora (strain ATCC MYA-333 / DSM 997 / K(L3346) / K-hell)</name>
    <dbReference type="NCBI Taxonomy" id="771870"/>
    <lineage>
        <taxon>Eukaryota</taxon>
        <taxon>Fungi</taxon>
        <taxon>Dikarya</taxon>
        <taxon>Ascomycota</taxon>
        <taxon>Pezizomycotina</taxon>
        <taxon>Sordariomycetes</taxon>
        <taxon>Sordariomycetidae</taxon>
        <taxon>Sordariales</taxon>
        <taxon>Sordariaceae</taxon>
        <taxon>Sordaria</taxon>
    </lineage>
</organism>
<reference key="1">
    <citation type="journal article" date="1997" name="J. Microbiol. Methods">
        <title>An efficient procedure to isolate fungal genes from an indexed cosmid library.</title>
        <authorList>
            <person name="Poeggeler S."/>
            <person name="Nowrousian M."/>
            <person name="Jacobsen S."/>
            <person name="Kueck U."/>
        </authorList>
    </citation>
    <scope>NUCLEOTIDE SEQUENCE [GENOMIC DNA]</scope>
    <source>
        <strain>ATCC MYA-333 / DSM 997 / K(L3346) / K-hell</strain>
    </source>
</reference>
<reference key="2">
    <citation type="journal article" date="2010" name="PLoS Genet.">
        <title>De novo assembly of a 40 Mb eukaryotic genome from short sequence reads: Sordaria macrospora, a model organism for fungal morphogenesis.</title>
        <authorList>
            <person name="Nowrousian M."/>
            <person name="Stajich J.E."/>
            <person name="Chu M."/>
            <person name="Engh I."/>
            <person name="Espagne E."/>
            <person name="Halliday K."/>
            <person name="Kamerewerd J."/>
            <person name="Kempken F."/>
            <person name="Knab B."/>
            <person name="Kuo H.-C."/>
            <person name="Osiewacz H.D."/>
            <person name="Poeggeler S."/>
            <person name="Read N.D."/>
            <person name="Seiler S."/>
            <person name="Smith K.M."/>
            <person name="Zickler D."/>
            <person name="Kueck U."/>
            <person name="Freitag M."/>
        </authorList>
    </citation>
    <scope>NUCLEOTIDE SEQUENCE [LARGE SCALE GENOMIC DNA]</scope>
    <source>
        <strain>ATCC MYA-333 / DSM 997 / K(L3346) / K-hell</strain>
    </source>
</reference>